<protein>
    <recommendedName>
        <fullName>Cohesin subunit psc3</fullName>
    </recommendedName>
    <alternativeName>
        <fullName>SCC3 homolog</fullName>
    </alternativeName>
</protein>
<keyword id="KW-0131">Cell cycle</keyword>
<keyword id="KW-0132">Cell division</keyword>
<keyword id="KW-0137">Centromere</keyword>
<keyword id="KW-0158">Chromosome</keyword>
<keyword id="KW-0159">Chromosome partition</keyword>
<keyword id="KW-0175">Coiled coil</keyword>
<keyword id="KW-0498">Mitosis</keyword>
<keyword id="KW-0539">Nucleus</keyword>
<keyword id="KW-1185">Reference proteome</keyword>
<proteinExistence type="evidence at protein level"/>
<accession>O13816</accession>
<accession>Q38G50</accession>
<accession>Q9US16</accession>
<feature type="chain" id="PRO_0000120192" description="Cohesin subunit psc3">
    <location>
        <begin position="1"/>
        <end position="962"/>
    </location>
</feature>
<feature type="domain" description="SCD" evidence="3">
    <location>
        <begin position="297"/>
        <end position="382"/>
    </location>
</feature>
<feature type="region of interest" description="Disordered" evidence="4">
    <location>
        <begin position="1"/>
        <end position="72"/>
    </location>
</feature>
<feature type="coiled-coil region" evidence="2">
    <location>
        <begin position="236"/>
        <end position="275"/>
    </location>
</feature>
<feature type="compositionally biased region" description="Polar residues" evidence="4">
    <location>
        <begin position="21"/>
        <end position="30"/>
    </location>
</feature>
<feature type="compositionally biased region" description="Basic residues" evidence="4">
    <location>
        <begin position="51"/>
        <end position="71"/>
    </location>
</feature>
<evidence type="ECO:0000250" key="1"/>
<evidence type="ECO:0000255" key="2"/>
<evidence type="ECO:0000255" key="3">
    <source>
        <dbReference type="PROSITE-ProRule" id="PRU00750"/>
    </source>
</evidence>
<evidence type="ECO:0000256" key="4">
    <source>
        <dbReference type="SAM" id="MobiDB-lite"/>
    </source>
</evidence>
<evidence type="ECO:0000269" key="5">
    <source>
    </source>
</evidence>
<evidence type="ECO:0000269" key="6">
    <source>
    </source>
</evidence>
<evidence type="ECO:0000305" key="7"/>
<reference key="1">
    <citation type="journal article" date="2000" name="Genes Dev.">
        <title>Characterization of fission yeast cohesin: essential anaphase proteolysis of Rad21 phosphorylated in the S phase.</title>
        <authorList>
            <person name="Tomonaga T."/>
            <person name="Nagao K."/>
            <person name="Kawasaki Y."/>
            <person name="Furuya K."/>
            <person name="Murakami A."/>
            <person name="Morishita J."/>
            <person name="Yuasa T."/>
            <person name="Sutani T."/>
            <person name="Kearsey S.E."/>
            <person name="Uhlmann F."/>
            <person name="Nasmyth K."/>
            <person name="Yanagida M."/>
        </authorList>
    </citation>
    <scope>NUCLEOTIDE SEQUENCE [GENOMIC DNA]</scope>
    <scope>FUNCTION</scope>
    <scope>SUBCELLULAR LOCATION</scope>
</reference>
<reference key="2">
    <citation type="journal article" date="2002" name="Nature">
        <title>The genome sequence of Schizosaccharomyces pombe.</title>
        <authorList>
            <person name="Wood V."/>
            <person name="Gwilliam R."/>
            <person name="Rajandream M.A."/>
            <person name="Lyne M.H."/>
            <person name="Lyne R."/>
            <person name="Stewart A."/>
            <person name="Sgouros J.G."/>
            <person name="Peat N."/>
            <person name="Hayles J."/>
            <person name="Baker S.G."/>
            <person name="Basham D."/>
            <person name="Bowman S."/>
            <person name="Brooks K."/>
            <person name="Brown D."/>
            <person name="Brown S."/>
            <person name="Chillingworth T."/>
            <person name="Churcher C.M."/>
            <person name="Collins M."/>
            <person name="Connor R."/>
            <person name="Cronin A."/>
            <person name="Davis P."/>
            <person name="Feltwell T."/>
            <person name="Fraser A."/>
            <person name="Gentles S."/>
            <person name="Goble A."/>
            <person name="Hamlin N."/>
            <person name="Harris D.E."/>
            <person name="Hidalgo J."/>
            <person name="Hodgson G."/>
            <person name="Holroyd S."/>
            <person name="Hornsby T."/>
            <person name="Howarth S."/>
            <person name="Huckle E.J."/>
            <person name="Hunt S."/>
            <person name="Jagels K."/>
            <person name="James K.D."/>
            <person name="Jones L."/>
            <person name="Jones M."/>
            <person name="Leather S."/>
            <person name="McDonald S."/>
            <person name="McLean J."/>
            <person name="Mooney P."/>
            <person name="Moule S."/>
            <person name="Mungall K.L."/>
            <person name="Murphy L.D."/>
            <person name="Niblett D."/>
            <person name="Odell C."/>
            <person name="Oliver K."/>
            <person name="O'Neil S."/>
            <person name="Pearson D."/>
            <person name="Quail M.A."/>
            <person name="Rabbinowitsch E."/>
            <person name="Rutherford K.M."/>
            <person name="Rutter S."/>
            <person name="Saunders D."/>
            <person name="Seeger K."/>
            <person name="Sharp S."/>
            <person name="Skelton J."/>
            <person name="Simmonds M.N."/>
            <person name="Squares R."/>
            <person name="Squares S."/>
            <person name="Stevens K."/>
            <person name="Taylor K."/>
            <person name="Taylor R.G."/>
            <person name="Tivey A."/>
            <person name="Walsh S.V."/>
            <person name="Warren T."/>
            <person name="Whitehead S."/>
            <person name="Woodward J.R."/>
            <person name="Volckaert G."/>
            <person name="Aert R."/>
            <person name="Robben J."/>
            <person name="Grymonprez B."/>
            <person name="Weltjens I."/>
            <person name="Vanstreels E."/>
            <person name="Rieger M."/>
            <person name="Schaefer M."/>
            <person name="Mueller-Auer S."/>
            <person name="Gabel C."/>
            <person name="Fuchs M."/>
            <person name="Duesterhoeft A."/>
            <person name="Fritzc C."/>
            <person name="Holzer E."/>
            <person name="Moestl D."/>
            <person name="Hilbert H."/>
            <person name="Borzym K."/>
            <person name="Langer I."/>
            <person name="Beck A."/>
            <person name="Lehrach H."/>
            <person name="Reinhardt R."/>
            <person name="Pohl T.M."/>
            <person name="Eger P."/>
            <person name="Zimmermann W."/>
            <person name="Wedler H."/>
            <person name="Wambutt R."/>
            <person name="Purnelle B."/>
            <person name="Goffeau A."/>
            <person name="Cadieu E."/>
            <person name="Dreano S."/>
            <person name="Gloux S."/>
            <person name="Lelaure V."/>
            <person name="Mottier S."/>
            <person name="Galibert F."/>
            <person name="Aves S.J."/>
            <person name="Xiang Z."/>
            <person name="Hunt C."/>
            <person name="Moore K."/>
            <person name="Hurst S.M."/>
            <person name="Lucas M."/>
            <person name="Rochet M."/>
            <person name="Gaillardin C."/>
            <person name="Tallada V.A."/>
            <person name="Garzon A."/>
            <person name="Thode G."/>
            <person name="Daga R.R."/>
            <person name="Cruzado L."/>
            <person name="Jimenez J."/>
            <person name="Sanchez M."/>
            <person name="del Rey F."/>
            <person name="Benito J."/>
            <person name="Dominguez A."/>
            <person name="Revuelta J.L."/>
            <person name="Moreno S."/>
            <person name="Armstrong J."/>
            <person name="Forsburg S.L."/>
            <person name="Cerutti L."/>
            <person name="Lowe T."/>
            <person name="McCombie W.R."/>
            <person name="Paulsen I."/>
            <person name="Potashkin J."/>
            <person name="Shpakovski G.V."/>
            <person name="Ussery D."/>
            <person name="Barrell B.G."/>
            <person name="Nurse P."/>
        </authorList>
    </citation>
    <scope>NUCLEOTIDE SEQUENCE [LARGE SCALE GENOMIC DNA]</scope>
    <source>
        <strain>972 / ATCC 24843</strain>
    </source>
</reference>
<reference key="3">
    <citation type="submission" date="2005-10" db="EMBL/GenBank/DDBJ databases">
        <authorList>
            <person name="Skelton J."/>
            <person name="Churcher C.M."/>
            <person name="Barrell B.G."/>
            <person name="Rajandream M.A."/>
            <person name="Wood V."/>
        </authorList>
    </citation>
    <scope>SEQUENCE REVISION</scope>
</reference>
<reference key="4">
    <citation type="journal article" date="2002" name="Nat. Cell Biol.">
        <title>Recruitment of cohesin to heterochromatic regions by Swi6/HP1 in fission yeast.</title>
        <authorList>
            <person name="Nonaka N."/>
            <person name="Kitajima T."/>
            <person name="Yokobayashi S."/>
            <person name="Xiao G."/>
            <person name="Yamamoto M."/>
            <person name="Grewal S.I.S."/>
            <person name="Watanabe Y."/>
        </authorList>
    </citation>
    <scope>INTERACTION WITH SWI6</scope>
</reference>
<reference key="5">
    <citation type="journal article" date="2005" name="Biol. Chem.">
        <title>Psc3 cohesin of Schizosaccharomyces pombe: cell cycle analysis and identification of three distinct isoforms.</title>
        <authorList>
            <person name="Ilyushik E."/>
            <person name="Pryce D.W."/>
            <person name="Walerych D."/>
            <person name="Riddell T."/>
            <person name="Wakeman J.A."/>
            <person name="McInerny C.J."/>
            <person name="McFarlane R.J."/>
        </authorList>
    </citation>
    <scope>IDENTIFICATION OF INTRON</scope>
</reference>
<organism>
    <name type="scientific">Schizosaccharomyces pombe (strain 972 / ATCC 24843)</name>
    <name type="common">Fission yeast</name>
    <dbReference type="NCBI Taxonomy" id="284812"/>
    <lineage>
        <taxon>Eukaryota</taxon>
        <taxon>Fungi</taxon>
        <taxon>Dikarya</taxon>
        <taxon>Ascomycota</taxon>
        <taxon>Taphrinomycotina</taxon>
        <taxon>Schizosaccharomycetes</taxon>
        <taxon>Schizosaccharomycetales</taxon>
        <taxon>Schizosaccharomycetaceae</taxon>
        <taxon>Schizosaccharomyces</taxon>
    </lineage>
</organism>
<sequence>MSESVTTGSDDDGGDRESSPVMLSQSFDPMSSSSNSSSEENSDDDYEKTISSKKRHPRPNSKGVNVKRSRRNAIVEEDPQEEIFNNLFAFLLDQKVDTMDIAVSWFADYAKDNQSALANLINFILKCCGCNRAINVFDVQDQDSASATLSQIQLSVERTSTRDYPLNSKNLKFRNFRKRLTGLLSNFVSQLSIRNYLYNSTVFEDIMSWVVAMSSSTMRPIRHTATVFCLNIMTFLCEKSKELLNEHAIATKQLEKEEKRSRVNRNRINELNNSLGEIVKQQDTLTTYLNDYFDSVFVHRYRDVEPKIRVDCLQELGVWINTVPSIFFSGSYLRYLGWMLSDINTTVRLTVVKVLRKFFETDSFIGGLRHFSSRFKERILEMSCVDADIGVRVASIRLCNAMRTCGFLENSEILKVLKLILDINPRVQREAVLFLCKVVDESVNEKIDLWGEEDYILKAFSQTSLTTFSVHWIKFSQMCKLLEEVRLSYQSSFDYDTLLRIFQKNGNFITPITQALLNACEIDSIYQSWEDISNFVLFDNYTSTLKDPIDSILSFCKLNDFQESILLQLLSASIQTVCNNNFITPKTVHNKQAAETTNDQNKDKDLLYLNLLPYINSITERNSASPTLLHDSLRLLFSMDLTEMTDPQLSRHFELLINNLKKFFLTNNDLQIIQGCTILFLRLDSIPALKEDLKLLVTDICDQTVTEFLKNFGSFNIQDAVITKDEFVIFEACLTRIEGCTSLKDFSDYPEFDIIYERLVSLLSRVPNSYEDTLKFSAINTLQSLLFWFFLRKDNPADEEKKKDDETKVFNCLINIMNNDSSKILQLQAARTFLETVIMKEGVKASHYNDDNRVSEEHNFLKPQFLDALLKILEGWLYTYAKVGQFPFKRLTQASSPHTQISLDKNPLNRRLLEHVCCDLTSKLLIVVSLSNTITPEFSQQFCELRGHYGPKLSAIVDEFLN</sequence>
<dbReference type="EMBL" id="CU329670">
    <property type="protein sequence ID" value="CAJ41421.2"/>
    <property type="molecule type" value="Genomic_DNA"/>
</dbReference>
<dbReference type="PIR" id="T37885">
    <property type="entry name" value="T50221"/>
</dbReference>
<dbReference type="RefSeq" id="XP_001713063.1">
    <property type="nucleotide sequence ID" value="XM_001713011.2"/>
</dbReference>
<dbReference type="SMR" id="O13816"/>
<dbReference type="BioGRID" id="278851">
    <property type="interactions" value="14"/>
</dbReference>
<dbReference type="DIP" id="DIP-37866N"/>
<dbReference type="FunCoup" id="O13816">
    <property type="interactions" value="340"/>
</dbReference>
<dbReference type="IntAct" id="O13816">
    <property type="interactions" value="3"/>
</dbReference>
<dbReference type="STRING" id="284812.O13816"/>
<dbReference type="iPTMnet" id="O13816"/>
<dbReference type="PaxDb" id="4896-SPAC17H9.20.1"/>
<dbReference type="EnsemblFungi" id="SPAC17H9.20.1">
    <property type="protein sequence ID" value="SPAC17H9.20.1:pep"/>
    <property type="gene ID" value="SPAC17H9.20"/>
</dbReference>
<dbReference type="PomBase" id="SPAC17H9.20">
    <property type="gene designation" value="psc3"/>
</dbReference>
<dbReference type="VEuPathDB" id="FungiDB:SPAC17H9.20"/>
<dbReference type="eggNOG" id="KOG2011">
    <property type="taxonomic scope" value="Eukaryota"/>
</dbReference>
<dbReference type="HOGENOM" id="CLU_309524_0_0_1"/>
<dbReference type="InParanoid" id="O13816"/>
<dbReference type="OMA" id="TMRPIRH"/>
<dbReference type="PhylomeDB" id="O13816"/>
<dbReference type="Reactome" id="R-SPO-2470946">
    <property type="pathway name" value="Cohesin Loading onto Chromatin"/>
</dbReference>
<dbReference type="Reactome" id="R-SPO-2500257">
    <property type="pathway name" value="Resolution of Sister Chromatid Cohesion"/>
</dbReference>
<dbReference type="Reactome" id="R-SPO-3108214">
    <property type="pathway name" value="SUMOylation of DNA damage response and repair proteins"/>
</dbReference>
<dbReference type="PRO" id="PR:O13816"/>
<dbReference type="Proteomes" id="UP000002485">
    <property type="component" value="Chromosome I"/>
</dbReference>
<dbReference type="GO" id="GO:0000785">
    <property type="term" value="C:chromatin"/>
    <property type="evidence" value="ECO:0000318"/>
    <property type="project" value="GO_Central"/>
</dbReference>
<dbReference type="GO" id="GO:0008278">
    <property type="term" value="C:cohesin complex"/>
    <property type="evidence" value="ECO:0000318"/>
    <property type="project" value="GO_Central"/>
</dbReference>
<dbReference type="GO" id="GO:0000779">
    <property type="term" value="C:condensed chromosome, centromeric region"/>
    <property type="evidence" value="ECO:0000314"/>
    <property type="project" value="PomBase"/>
</dbReference>
<dbReference type="GO" id="GO:0000794">
    <property type="term" value="C:condensed nuclear chromosome"/>
    <property type="evidence" value="ECO:0000305"/>
    <property type="project" value="PomBase"/>
</dbReference>
<dbReference type="GO" id="GO:0031934">
    <property type="term" value="C:mating-type region heterochromatin"/>
    <property type="evidence" value="ECO:0000314"/>
    <property type="project" value="PomBase"/>
</dbReference>
<dbReference type="GO" id="GO:0030892">
    <property type="term" value="C:mitotic cohesin complex"/>
    <property type="evidence" value="ECO:0000314"/>
    <property type="project" value="PomBase"/>
</dbReference>
<dbReference type="GO" id="GO:0005634">
    <property type="term" value="C:nucleus"/>
    <property type="evidence" value="ECO:0000314"/>
    <property type="project" value="PomBase"/>
</dbReference>
<dbReference type="GO" id="GO:0005721">
    <property type="term" value="C:pericentric heterochromatin"/>
    <property type="evidence" value="ECO:0000314"/>
    <property type="project" value="PomBase"/>
</dbReference>
<dbReference type="GO" id="GO:0140720">
    <property type="term" value="C:subtelomeric heterochromatin"/>
    <property type="evidence" value="ECO:0000314"/>
    <property type="project" value="PomBase"/>
</dbReference>
<dbReference type="GO" id="GO:0003682">
    <property type="term" value="F:chromatin binding"/>
    <property type="evidence" value="ECO:0000318"/>
    <property type="project" value="GO_Central"/>
</dbReference>
<dbReference type="GO" id="GO:0003677">
    <property type="term" value="F:DNA binding"/>
    <property type="evidence" value="ECO:0000314"/>
    <property type="project" value="PomBase"/>
</dbReference>
<dbReference type="GO" id="GO:0051301">
    <property type="term" value="P:cell division"/>
    <property type="evidence" value="ECO:0007669"/>
    <property type="project" value="UniProtKB-KW"/>
</dbReference>
<dbReference type="GO" id="GO:0140588">
    <property type="term" value="P:chromatin looping"/>
    <property type="evidence" value="ECO:0000314"/>
    <property type="project" value="PomBase"/>
</dbReference>
<dbReference type="GO" id="GO:0007059">
    <property type="term" value="P:chromosome segregation"/>
    <property type="evidence" value="ECO:0007669"/>
    <property type="project" value="UniProtKB-KW"/>
</dbReference>
<dbReference type="GO" id="GO:0051754">
    <property type="term" value="P:meiotic sister chromatid cohesion, centromeric"/>
    <property type="evidence" value="ECO:0000315"/>
    <property type="project" value="PomBase"/>
</dbReference>
<dbReference type="GO" id="GO:0007064">
    <property type="term" value="P:mitotic sister chromatid cohesion"/>
    <property type="evidence" value="ECO:0000314"/>
    <property type="project" value="PomBase"/>
</dbReference>
<dbReference type="GO" id="GO:0071962">
    <property type="term" value="P:mitotic sister chromatid cohesion, centromeric"/>
    <property type="evidence" value="ECO:0000315"/>
    <property type="project" value="PomBase"/>
</dbReference>
<dbReference type="GO" id="GO:0007062">
    <property type="term" value="P:sister chromatid cohesion"/>
    <property type="evidence" value="ECO:0000318"/>
    <property type="project" value="GO_Central"/>
</dbReference>
<dbReference type="Gene3D" id="1.25.10.10">
    <property type="entry name" value="Leucine-rich Repeat Variant"/>
    <property type="match status" value="1"/>
</dbReference>
<dbReference type="InterPro" id="IPR011989">
    <property type="entry name" value="ARM-like"/>
</dbReference>
<dbReference type="InterPro" id="IPR016024">
    <property type="entry name" value="ARM-type_fold"/>
</dbReference>
<dbReference type="InterPro" id="IPR039662">
    <property type="entry name" value="Cohesin_Scc3/SA"/>
</dbReference>
<dbReference type="InterPro" id="IPR056396">
    <property type="entry name" value="HEAT_SCC3-SA"/>
</dbReference>
<dbReference type="InterPro" id="IPR020839">
    <property type="entry name" value="SCD"/>
</dbReference>
<dbReference type="InterPro" id="IPR013721">
    <property type="entry name" value="STAG"/>
</dbReference>
<dbReference type="PANTHER" id="PTHR11199:SF0">
    <property type="entry name" value="LD34181P-RELATED"/>
    <property type="match status" value="1"/>
</dbReference>
<dbReference type="PANTHER" id="PTHR11199">
    <property type="entry name" value="STROMAL ANTIGEN"/>
    <property type="match status" value="1"/>
</dbReference>
<dbReference type="Pfam" id="PF24571">
    <property type="entry name" value="HEAT_SCC3-SA"/>
    <property type="match status" value="1"/>
</dbReference>
<dbReference type="Pfam" id="PF21581">
    <property type="entry name" value="SCD"/>
    <property type="match status" value="1"/>
</dbReference>
<dbReference type="Pfam" id="PF08514">
    <property type="entry name" value="STAG"/>
    <property type="match status" value="1"/>
</dbReference>
<dbReference type="SUPFAM" id="SSF48371">
    <property type="entry name" value="ARM repeat"/>
    <property type="match status" value="1"/>
</dbReference>
<dbReference type="PROSITE" id="PS51425">
    <property type="entry name" value="SCD"/>
    <property type="match status" value="1"/>
</dbReference>
<gene>
    <name type="primary">psc3</name>
    <name type="ORF">SPAC17H9.20</name>
    <name type="ORF">SPAC607.01</name>
</gene>
<comment type="function">
    <text evidence="5">Component of cohesin complex, a complex required for the cohesion of sister chromatids after DNA replication. The cohesin complex apparently forms a large proteinaceous ring within which sister chromatids can be trapped. At anaphase, the rad21 subunit of the cohesin complex is cleaved and dissociates from chromatin, allowing sister chromatids to segregate. The cohesin complex may also play a role in spindle pole assembly during mitosis.</text>
</comment>
<comment type="subunit">
    <text evidence="1 6">Cohesin complexes are composed of the psm1/smc1 and psm3/smc3 heterodimer attached via their hinge domain, rad21/scc1 which link them, and psc3/scc3, which interacts with rad21. Interacts with swi6 (By similarity). The interaction with swi6 may contribute to recruit cohesin complex to heterochromatin.</text>
</comment>
<comment type="interaction">
    <interactant intactId="EBI-1131314">
        <id>O13816</id>
    </interactant>
    <interactant intactId="EBI-16083239">
        <id>Q09725</id>
        <label>mis4</label>
    </interactant>
    <organismsDiffer>false</organismsDiffer>
    <experiments>2</experiments>
</comment>
<comment type="subcellular location">
    <subcellularLocation>
        <location evidence="3 5">Nucleus</location>
    </subcellularLocation>
    <subcellularLocation>
        <location evidence="5">Chromosome</location>
        <location evidence="5">Centromere</location>
    </subcellularLocation>
    <text>Associates with chromatin. Cohesin complex mainly associates with broad centromere region. Also associates with mating-type heterochromatic region.</text>
</comment>
<comment type="similarity">
    <text evidence="7">Belongs to the SCC3 family.</text>
</comment>
<name>SCC3_SCHPO</name>